<evidence type="ECO:0000250" key="1">
    <source>
        <dbReference type="UniProtKB" id="Q9HC35"/>
    </source>
</evidence>
<evidence type="ECO:0000256" key="2">
    <source>
        <dbReference type="SAM" id="MobiDB-lite"/>
    </source>
</evidence>
<evidence type="ECO:0000269" key="3">
    <source>
    </source>
</evidence>
<evidence type="ECO:0000303" key="4">
    <source>
    </source>
</evidence>
<evidence type="ECO:0000305" key="5"/>
<evidence type="ECO:0007744" key="6">
    <source>
    </source>
</evidence>
<evidence type="ECO:0007744" key="7">
    <source>
    </source>
</evidence>
<feature type="chain" id="PRO_0000284392" description="Echinoderm microtubule-associated protein-like 4">
    <location>
        <begin position="1"/>
        <end position="988"/>
    </location>
</feature>
<feature type="repeat" description="WD 1">
    <location>
        <begin position="270"/>
        <end position="308"/>
    </location>
</feature>
<feature type="repeat" description="WD 2">
    <location>
        <begin position="312"/>
        <end position="359"/>
    </location>
</feature>
<feature type="repeat" description="WD 3">
    <location>
        <begin position="367"/>
        <end position="407"/>
    </location>
</feature>
<feature type="repeat" description="WD 4">
    <location>
        <begin position="414"/>
        <end position="449"/>
    </location>
</feature>
<feature type="repeat" description="WD 5">
    <location>
        <begin position="456"/>
        <end position="495"/>
    </location>
</feature>
<feature type="repeat" description="WD 6">
    <location>
        <begin position="511"/>
        <end position="549"/>
    </location>
</feature>
<feature type="repeat" description="WD 7">
    <location>
        <begin position="554"/>
        <end position="590"/>
    </location>
</feature>
<feature type="repeat" description="WD 8">
    <location>
        <begin position="593"/>
        <end position="632"/>
    </location>
</feature>
<feature type="repeat" description="WD 9">
    <location>
        <begin position="636"/>
        <end position="673"/>
    </location>
</feature>
<feature type="repeat" description="WD 10">
    <location>
        <begin position="679"/>
        <end position="715"/>
    </location>
</feature>
<feature type="repeat" description="WD 11">
    <location>
        <begin position="722"/>
        <end position="761"/>
    </location>
</feature>
<feature type="repeat" description="WD 12">
    <location>
        <begin position="771"/>
        <end position="829"/>
    </location>
</feature>
<feature type="repeat" description="WD 13">
    <location>
        <begin position="836"/>
        <end position="875"/>
    </location>
</feature>
<feature type="region of interest" description="Microtubule-binding" evidence="1">
    <location>
        <begin position="1"/>
        <end position="260"/>
    </location>
</feature>
<feature type="region of interest" description="Disordered" evidence="2">
    <location>
        <begin position="106"/>
        <end position="194"/>
    </location>
</feature>
<feature type="region of interest" description="Disordered" evidence="2">
    <location>
        <begin position="887"/>
        <end position="988"/>
    </location>
</feature>
<feature type="coiled-coil region" evidence="1">
    <location>
        <begin position="14"/>
        <end position="63"/>
    </location>
</feature>
<feature type="compositionally biased region" description="Basic and acidic residues" evidence="2">
    <location>
        <begin position="114"/>
        <end position="134"/>
    </location>
</feature>
<feature type="compositionally biased region" description="Low complexity" evidence="2">
    <location>
        <begin position="137"/>
        <end position="155"/>
    </location>
</feature>
<feature type="compositionally biased region" description="Polar residues" evidence="2">
    <location>
        <begin position="156"/>
        <end position="168"/>
    </location>
</feature>
<feature type="compositionally biased region" description="Basic and acidic residues" evidence="2">
    <location>
        <begin position="176"/>
        <end position="193"/>
    </location>
</feature>
<feature type="compositionally biased region" description="Polar residues" evidence="2">
    <location>
        <begin position="890"/>
        <end position="904"/>
    </location>
</feature>
<feature type="compositionally biased region" description="Polar residues" evidence="2">
    <location>
        <begin position="927"/>
        <end position="939"/>
    </location>
</feature>
<feature type="compositionally biased region" description="Acidic residues" evidence="2">
    <location>
        <begin position="944"/>
        <end position="953"/>
    </location>
</feature>
<feature type="modified residue" description="N-acetylmethionine" evidence="1">
    <location>
        <position position="1"/>
    </location>
</feature>
<feature type="modified residue" description="Phosphoserine" evidence="1">
    <location>
        <position position="7"/>
    </location>
</feature>
<feature type="modified residue" description="Phosphoserine" evidence="1">
    <location>
        <position position="13"/>
    </location>
</feature>
<feature type="modified residue" description="Phosphoserine" evidence="1">
    <location>
        <position position="16"/>
    </location>
</feature>
<feature type="modified residue" description="Phosphoserine" evidence="1">
    <location>
        <position position="61"/>
    </location>
</feature>
<feature type="modified residue" description="Phosphoserine" evidence="6 7">
    <location>
        <position position="79"/>
    </location>
</feature>
<feature type="modified residue" description="Phosphothreonine" evidence="1">
    <location>
        <position position="96"/>
    </location>
</feature>
<feature type="modified residue" description="Phosphoserine; by NEK7" evidence="1">
    <location>
        <position position="134"/>
    </location>
</feature>
<feature type="modified residue" description="Phosphoserine; by NEK6" evidence="1 7">
    <location>
        <position position="144"/>
    </location>
</feature>
<feature type="modified residue" description="Phosphoserine; by NEK7" evidence="1 7">
    <location>
        <position position="146"/>
    </location>
</feature>
<feature type="modified residue" description="Phosphoserine" evidence="1">
    <location>
        <position position="171"/>
    </location>
</feature>
<feature type="modified residue" description="Phosphoserine" evidence="1">
    <location>
        <position position="200"/>
    </location>
</feature>
<feature type="modified residue" description="Phosphothreonine" evidence="1">
    <location>
        <position position="201"/>
    </location>
</feature>
<feature type="modified residue" description="Phosphotyrosine" evidence="1">
    <location>
        <position position="237"/>
    </location>
</feature>
<feature type="modified residue" description="Phosphothreonine" evidence="1">
    <location>
        <position position="248"/>
    </location>
</feature>
<feature type="modified residue" description="Phosphothreonine; by NEK6 and NEK7" evidence="1">
    <location>
        <position position="620"/>
    </location>
</feature>
<feature type="modified residue" description="Phosphoserine" evidence="1">
    <location>
        <position position="906"/>
    </location>
</feature>
<feature type="modified residue" description="Phosphoserine" evidence="7">
    <location>
        <position position="908"/>
    </location>
</feature>
<feature type="modified residue" description="Phosphoserine" evidence="1">
    <location>
        <position position="914"/>
    </location>
</feature>
<feature type="splice variant" id="VSP_024484" description="In isoform 3." evidence="4">
    <original>MDGFAGSL</original>
    <variation>MNRVSSDPVAIP</variation>
    <location>
        <begin position="1"/>
        <end position="8"/>
    </location>
</feature>
<feature type="splice variant" id="VSP_024485" description="In isoform 4." evidence="4">
    <original>SGTEKKKEKPQGQREKKEDSHSNDQSPQIRASPSPQPSSQPLQINRQTPESKSSAPIKSIKRPPTAEKSHNSWENSDDSRNKLMKTVSTSKLISKVIKNADK</original>
    <variation>R</variation>
    <location>
        <begin position="113"/>
        <end position="214"/>
    </location>
</feature>
<feature type="splice variant" id="VSP_024486" description="In isoform 2 and isoform 3." evidence="4">
    <location>
        <begin position="114"/>
        <end position="171"/>
    </location>
</feature>
<feature type="splice variant" id="VSP_024487" description="In isoform 2 and isoform 4." evidence="4">
    <location>
        <begin position="223"/>
        <end position="233"/>
    </location>
</feature>
<feature type="sequence conflict" description="In Ref. 2; AAH67011/AAH66099/AAH79619/AAH65178/AAH70427." evidence="5" ref="2">
    <original>R</original>
    <variation>T</variation>
    <location>
        <position position="603"/>
    </location>
</feature>
<feature type="sequence conflict" description="In Ref. 2; AAH67011." evidence="5" ref="2">
    <original>N</original>
    <variation>I</variation>
    <location>
        <position position="804"/>
    </location>
</feature>
<keyword id="KW-0007">Acetylation</keyword>
<keyword id="KW-0025">Alternative splicing</keyword>
<keyword id="KW-0131">Cell cycle</keyword>
<keyword id="KW-0132">Cell division</keyword>
<keyword id="KW-0175">Coiled coil</keyword>
<keyword id="KW-0963">Cytoplasm</keyword>
<keyword id="KW-0206">Cytoskeleton</keyword>
<keyword id="KW-0493">Microtubule</keyword>
<keyword id="KW-0498">Mitosis</keyword>
<keyword id="KW-0597">Phosphoprotein</keyword>
<keyword id="KW-1185">Reference proteome</keyword>
<keyword id="KW-0677">Repeat</keyword>
<keyword id="KW-0853">WD repeat</keyword>
<gene>
    <name type="primary">Eml4</name>
</gene>
<dbReference type="EMBL" id="AK144604">
    <property type="protein sequence ID" value="BAE25963.1"/>
    <property type="molecule type" value="mRNA"/>
</dbReference>
<dbReference type="EMBL" id="BC065178">
    <property type="protein sequence ID" value="AAH65178.1"/>
    <property type="molecule type" value="mRNA"/>
</dbReference>
<dbReference type="EMBL" id="BC066099">
    <property type="protein sequence ID" value="AAH66099.1"/>
    <property type="molecule type" value="mRNA"/>
</dbReference>
<dbReference type="EMBL" id="BC067011">
    <property type="protein sequence ID" value="AAH67011.1"/>
    <property type="molecule type" value="mRNA"/>
</dbReference>
<dbReference type="EMBL" id="BC070427">
    <property type="protein sequence ID" value="AAH70427.1"/>
    <property type="molecule type" value="mRNA"/>
</dbReference>
<dbReference type="EMBL" id="BC079619">
    <property type="protein sequence ID" value="AAH79619.1"/>
    <property type="molecule type" value="mRNA"/>
</dbReference>
<dbReference type="CCDS" id="CCDS37708.1">
    <molecule id="Q3UMY5-4"/>
</dbReference>
<dbReference type="CCDS" id="CCDS50192.1">
    <molecule id="Q3UMY5-1"/>
</dbReference>
<dbReference type="CCDS" id="CCDS50193.1">
    <molecule id="Q3UMY5-2"/>
</dbReference>
<dbReference type="RefSeq" id="NP_001107834.1">
    <property type="nucleotide sequence ID" value="NM_001114362.1"/>
</dbReference>
<dbReference type="RefSeq" id="NP_001273496.1">
    <property type="nucleotide sequence ID" value="NM_001286567.1"/>
</dbReference>
<dbReference type="RefSeq" id="NP_955760.3">
    <property type="nucleotide sequence ID" value="NM_199466.3"/>
</dbReference>
<dbReference type="SMR" id="Q3UMY5"/>
<dbReference type="BioGRID" id="219641">
    <property type="interactions" value="3"/>
</dbReference>
<dbReference type="FunCoup" id="Q3UMY5">
    <property type="interactions" value="935"/>
</dbReference>
<dbReference type="STRING" id="10090.ENSMUSP00000094528"/>
<dbReference type="GlyGen" id="Q3UMY5">
    <property type="glycosylation" value="1 site, 1 N-linked glycan (1 site)"/>
</dbReference>
<dbReference type="iPTMnet" id="Q3UMY5"/>
<dbReference type="PhosphoSitePlus" id="Q3UMY5"/>
<dbReference type="jPOST" id="Q3UMY5"/>
<dbReference type="PaxDb" id="10090-ENSMUSP00000094528"/>
<dbReference type="PeptideAtlas" id="Q3UMY5"/>
<dbReference type="ProteomicsDB" id="277827">
    <molecule id="Q3UMY5-1"/>
</dbReference>
<dbReference type="ProteomicsDB" id="277828">
    <molecule id="Q3UMY5-2"/>
</dbReference>
<dbReference type="ProteomicsDB" id="277829">
    <molecule id="Q3UMY5-3"/>
</dbReference>
<dbReference type="ProteomicsDB" id="277830">
    <molecule id="Q3UMY5-4"/>
</dbReference>
<dbReference type="DNASU" id="78798"/>
<dbReference type="GeneID" id="78798"/>
<dbReference type="KEGG" id="mmu:78798"/>
<dbReference type="UCSC" id="uc008drx.2">
    <molecule id="Q3UMY5-4"/>
    <property type="organism name" value="mouse"/>
</dbReference>
<dbReference type="UCSC" id="uc008dry.2">
    <molecule id="Q3UMY5-3"/>
    <property type="organism name" value="mouse"/>
</dbReference>
<dbReference type="UCSC" id="uc008dsb.2">
    <molecule id="Q3UMY5-2"/>
    <property type="organism name" value="mouse"/>
</dbReference>
<dbReference type="AGR" id="MGI:1926048"/>
<dbReference type="CTD" id="27436"/>
<dbReference type="MGI" id="MGI:1926048">
    <property type="gene designation" value="Eml4"/>
</dbReference>
<dbReference type="eggNOG" id="KOG2106">
    <property type="taxonomic scope" value="Eukaryota"/>
</dbReference>
<dbReference type="InParanoid" id="Q3UMY5"/>
<dbReference type="OrthoDB" id="47802at2759"/>
<dbReference type="PhylomeDB" id="Q3UMY5"/>
<dbReference type="Reactome" id="R-MMU-9648025">
    <property type="pathway name" value="EML4 and NUDC in mitotic spindle formation"/>
</dbReference>
<dbReference type="BioGRID-ORCS" id="78798">
    <property type="hits" value="4 hits in 79 CRISPR screens"/>
</dbReference>
<dbReference type="ChiTaRS" id="Eml4">
    <property type="organism name" value="mouse"/>
</dbReference>
<dbReference type="PRO" id="PR:Q3UMY5"/>
<dbReference type="Proteomes" id="UP000000589">
    <property type="component" value="Unplaced"/>
</dbReference>
<dbReference type="RNAct" id="Q3UMY5">
    <property type="molecule type" value="protein"/>
</dbReference>
<dbReference type="GO" id="GO:0005737">
    <property type="term" value="C:cytoplasm"/>
    <property type="evidence" value="ECO:0000250"/>
    <property type="project" value="UniProtKB"/>
</dbReference>
<dbReference type="GO" id="GO:0005874">
    <property type="term" value="C:microtubule"/>
    <property type="evidence" value="ECO:0000250"/>
    <property type="project" value="UniProtKB"/>
</dbReference>
<dbReference type="GO" id="GO:0015630">
    <property type="term" value="C:microtubule cytoskeleton"/>
    <property type="evidence" value="ECO:0000314"/>
    <property type="project" value="MGI"/>
</dbReference>
<dbReference type="GO" id="GO:0005815">
    <property type="term" value="C:microtubule organizing center"/>
    <property type="evidence" value="ECO:0000250"/>
    <property type="project" value="UniProtKB"/>
</dbReference>
<dbReference type="GO" id="GO:0030496">
    <property type="term" value="C:midbody"/>
    <property type="evidence" value="ECO:0000250"/>
    <property type="project" value="UniProtKB"/>
</dbReference>
<dbReference type="GO" id="GO:0072686">
    <property type="term" value="C:mitotic spindle"/>
    <property type="evidence" value="ECO:0000314"/>
    <property type="project" value="MGI"/>
</dbReference>
<dbReference type="GO" id="GO:0043014">
    <property type="term" value="F:alpha-tubulin binding"/>
    <property type="evidence" value="ECO:0000250"/>
    <property type="project" value="UniProtKB"/>
</dbReference>
<dbReference type="GO" id="GO:0048487">
    <property type="term" value="F:beta-tubulin binding"/>
    <property type="evidence" value="ECO:0000250"/>
    <property type="project" value="UniProtKB"/>
</dbReference>
<dbReference type="GO" id="GO:0008608">
    <property type="term" value="P:attachment of spindle microtubules to kinetochore"/>
    <property type="evidence" value="ECO:0000250"/>
    <property type="project" value="UniProtKB"/>
</dbReference>
<dbReference type="GO" id="GO:0051301">
    <property type="term" value="P:cell division"/>
    <property type="evidence" value="ECO:0007669"/>
    <property type="project" value="UniProtKB-KW"/>
</dbReference>
<dbReference type="GO" id="GO:0007080">
    <property type="term" value="P:mitotic metaphase chromosome alignment"/>
    <property type="evidence" value="ECO:0000250"/>
    <property type="project" value="UniProtKB"/>
</dbReference>
<dbReference type="GO" id="GO:0007026">
    <property type="term" value="P:negative regulation of microtubule depolymerization"/>
    <property type="evidence" value="ECO:0000315"/>
    <property type="project" value="MGI"/>
</dbReference>
<dbReference type="CDD" id="cd21950">
    <property type="entry name" value="TD_EMAP4"/>
    <property type="match status" value="1"/>
</dbReference>
<dbReference type="FunFam" id="2.130.10.10:FF:000019">
    <property type="entry name" value="echinoderm microtubule-associated protein-like 4 isoform X2"/>
    <property type="match status" value="1"/>
</dbReference>
<dbReference type="FunFam" id="2.130.10.10:FF:003552">
    <property type="entry name" value="Uncharacterized protein"/>
    <property type="match status" value="1"/>
</dbReference>
<dbReference type="Gene3D" id="2.130.10.10">
    <property type="entry name" value="YVTN repeat-like/Quinoprotein amine dehydrogenase"/>
    <property type="match status" value="2"/>
</dbReference>
<dbReference type="InterPro" id="IPR055442">
    <property type="entry name" value="Beta-prop_EML-like_2nd"/>
</dbReference>
<dbReference type="InterPro" id="IPR055439">
    <property type="entry name" value="Beta-prop_EML_1st"/>
</dbReference>
<dbReference type="InterPro" id="IPR005108">
    <property type="entry name" value="HELP"/>
</dbReference>
<dbReference type="InterPro" id="IPR011047">
    <property type="entry name" value="Quinoprotein_ADH-like_sf"/>
</dbReference>
<dbReference type="InterPro" id="IPR015943">
    <property type="entry name" value="WD40/YVTN_repeat-like_dom_sf"/>
</dbReference>
<dbReference type="InterPro" id="IPR036322">
    <property type="entry name" value="WD40_repeat_dom_sf"/>
</dbReference>
<dbReference type="InterPro" id="IPR001680">
    <property type="entry name" value="WD40_rpt"/>
</dbReference>
<dbReference type="InterPro" id="IPR050630">
    <property type="entry name" value="WD_repeat_EMAP"/>
</dbReference>
<dbReference type="PANTHER" id="PTHR13720:SF11">
    <property type="entry name" value="ECHINODERM MICROTUBULE-ASSOCIATED PROTEIN-LIKE 4"/>
    <property type="match status" value="1"/>
</dbReference>
<dbReference type="PANTHER" id="PTHR13720">
    <property type="entry name" value="WD-40 REPEAT PROTEIN"/>
    <property type="match status" value="1"/>
</dbReference>
<dbReference type="Pfam" id="PF23409">
    <property type="entry name" value="Beta-prop_EML"/>
    <property type="match status" value="1"/>
</dbReference>
<dbReference type="Pfam" id="PF23414">
    <property type="entry name" value="Beta-prop_EML_2"/>
    <property type="match status" value="1"/>
</dbReference>
<dbReference type="Pfam" id="PF03451">
    <property type="entry name" value="HELP"/>
    <property type="match status" value="1"/>
</dbReference>
<dbReference type="SMART" id="SM00320">
    <property type="entry name" value="WD40"/>
    <property type="match status" value="9"/>
</dbReference>
<dbReference type="SUPFAM" id="SSF50998">
    <property type="entry name" value="Quinoprotein alcohol dehydrogenase-like"/>
    <property type="match status" value="1"/>
</dbReference>
<dbReference type="SUPFAM" id="SSF50978">
    <property type="entry name" value="WD40 repeat-like"/>
    <property type="match status" value="1"/>
</dbReference>
<dbReference type="PROSITE" id="PS00678">
    <property type="entry name" value="WD_REPEATS_1"/>
    <property type="match status" value="1"/>
</dbReference>
<dbReference type="PROSITE" id="PS50082">
    <property type="entry name" value="WD_REPEATS_2"/>
    <property type="match status" value="4"/>
</dbReference>
<dbReference type="PROSITE" id="PS50294">
    <property type="entry name" value="WD_REPEATS_REGION"/>
    <property type="match status" value="3"/>
</dbReference>
<reference key="1">
    <citation type="journal article" date="2005" name="Science">
        <title>The transcriptional landscape of the mammalian genome.</title>
        <authorList>
            <person name="Carninci P."/>
            <person name="Kasukawa T."/>
            <person name="Katayama S."/>
            <person name="Gough J."/>
            <person name="Frith M.C."/>
            <person name="Maeda N."/>
            <person name="Oyama R."/>
            <person name="Ravasi T."/>
            <person name="Lenhard B."/>
            <person name="Wells C."/>
            <person name="Kodzius R."/>
            <person name="Shimokawa K."/>
            <person name="Bajic V.B."/>
            <person name="Brenner S.E."/>
            <person name="Batalov S."/>
            <person name="Forrest A.R."/>
            <person name="Zavolan M."/>
            <person name="Davis M.J."/>
            <person name="Wilming L.G."/>
            <person name="Aidinis V."/>
            <person name="Allen J.E."/>
            <person name="Ambesi-Impiombato A."/>
            <person name="Apweiler R."/>
            <person name="Aturaliya R.N."/>
            <person name="Bailey T.L."/>
            <person name="Bansal M."/>
            <person name="Baxter L."/>
            <person name="Beisel K.W."/>
            <person name="Bersano T."/>
            <person name="Bono H."/>
            <person name="Chalk A.M."/>
            <person name="Chiu K.P."/>
            <person name="Choudhary V."/>
            <person name="Christoffels A."/>
            <person name="Clutterbuck D.R."/>
            <person name="Crowe M.L."/>
            <person name="Dalla E."/>
            <person name="Dalrymple B.P."/>
            <person name="de Bono B."/>
            <person name="Della Gatta G."/>
            <person name="di Bernardo D."/>
            <person name="Down T."/>
            <person name="Engstrom P."/>
            <person name="Fagiolini M."/>
            <person name="Faulkner G."/>
            <person name="Fletcher C.F."/>
            <person name="Fukushima T."/>
            <person name="Furuno M."/>
            <person name="Futaki S."/>
            <person name="Gariboldi M."/>
            <person name="Georgii-Hemming P."/>
            <person name="Gingeras T.R."/>
            <person name="Gojobori T."/>
            <person name="Green R.E."/>
            <person name="Gustincich S."/>
            <person name="Harbers M."/>
            <person name="Hayashi Y."/>
            <person name="Hensch T.K."/>
            <person name="Hirokawa N."/>
            <person name="Hill D."/>
            <person name="Huminiecki L."/>
            <person name="Iacono M."/>
            <person name="Ikeo K."/>
            <person name="Iwama A."/>
            <person name="Ishikawa T."/>
            <person name="Jakt M."/>
            <person name="Kanapin A."/>
            <person name="Katoh M."/>
            <person name="Kawasawa Y."/>
            <person name="Kelso J."/>
            <person name="Kitamura H."/>
            <person name="Kitano H."/>
            <person name="Kollias G."/>
            <person name="Krishnan S.P."/>
            <person name="Kruger A."/>
            <person name="Kummerfeld S.K."/>
            <person name="Kurochkin I.V."/>
            <person name="Lareau L.F."/>
            <person name="Lazarevic D."/>
            <person name="Lipovich L."/>
            <person name="Liu J."/>
            <person name="Liuni S."/>
            <person name="McWilliam S."/>
            <person name="Madan Babu M."/>
            <person name="Madera M."/>
            <person name="Marchionni L."/>
            <person name="Matsuda H."/>
            <person name="Matsuzawa S."/>
            <person name="Miki H."/>
            <person name="Mignone F."/>
            <person name="Miyake S."/>
            <person name="Morris K."/>
            <person name="Mottagui-Tabar S."/>
            <person name="Mulder N."/>
            <person name="Nakano N."/>
            <person name="Nakauchi H."/>
            <person name="Ng P."/>
            <person name="Nilsson R."/>
            <person name="Nishiguchi S."/>
            <person name="Nishikawa S."/>
            <person name="Nori F."/>
            <person name="Ohara O."/>
            <person name="Okazaki Y."/>
            <person name="Orlando V."/>
            <person name="Pang K.C."/>
            <person name="Pavan W.J."/>
            <person name="Pavesi G."/>
            <person name="Pesole G."/>
            <person name="Petrovsky N."/>
            <person name="Piazza S."/>
            <person name="Reed J."/>
            <person name="Reid J.F."/>
            <person name="Ring B.Z."/>
            <person name="Ringwald M."/>
            <person name="Rost B."/>
            <person name="Ruan Y."/>
            <person name="Salzberg S.L."/>
            <person name="Sandelin A."/>
            <person name="Schneider C."/>
            <person name="Schoenbach C."/>
            <person name="Sekiguchi K."/>
            <person name="Semple C.A."/>
            <person name="Seno S."/>
            <person name="Sessa L."/>
            <person name="Sheng Y."/>
            <person name="Shibata Y."/>
            <person name="Shimada H."/>
            <person name="Shimada K."/>
            <person name="Silva D."/>
            <person name="Sinclair B."/>
            <person name="Sperling S."/>
            <person name="Stupka E."/>
            <person name="Sugiura K."/>
            <person name="Sultana R."/>
            <person name="Takenaka Y."/>
            <person name="Taki K."/>
            <person name="Tammoja K."/>
            <person name="Tan S.L."/>
            <person name="Tang S."/>
            <person name="Taylor M.S."/>
            <person name="Tegner J."/>
            <person name="Teichmann S.A."/>
            <person name="Ueda H.R."/>
            <person name="van Nimwegen E."/>
            <person name="Verardo R."/>
            <person name="Wei C.L."/>
            <person name="Yagi K."/>
            <person name="Yamanishi H."/>
            <person name="Zabarovsky E."/>
            <person name="Zhu S."/>
            <person name="Zimmer A."/>
            <person name="Hide W."/>
            <person name="Bult C."/>
            <person name="Grimmond S.M."/>
            <person name="Teasdale R.D."/>
            <person name="Liu E.T."/>
            <person name="Brusic V."/>
            <person name="Quackenbush J."/>
            <person name="Wahlestedt C."/>
            <person name="Mattick J.S."/>
            <person name="Hume D.A."/>
            <person name="Kai C."/>
            <person name="Sasaki D."/>
            <person name="Tomaru Y."/>
            <person name="Fukuda S."/>
            <person name="Kanamori-Katayama M."/>
            <person name="Suzuki M."/>
            <person name="Aoki J."/>
            <person name="Arakawa T."/>
            <person name="Iida J."/>
            <person name="Imamura K."/>
            <person name="Itoh M."/>
            <person name="Kato T."/>
            <person name="Kawaji H."/>
            <person name="Kawagashira N."/>
            <person name="Kawashima T."/>
            <person name="Kojima M."/>
            <person name="Kondo S."/>
            <person name="Konno H."/>
            <person name="Nakano K."/>
            <person name="Ninomiya N."/>
            <person name="Nishio T."/>
            <person name="Okada M."/>
            <person name="Plessy C."/>
            <person name="Shibata K."/>
            <person name="Shiraki T."/>
            <person name="Suzuki S."/>
            <person name="Tagami M."/>
            <person name="Waki K."/>
            <person name="Watahiki A."/>
            <person name="Okamura-Oho Y."/>
            <person name="Suzuki H."/>
            <person name="Kawai J."/>
            <person name="Hayashizaki Y."/>
        </authorList>
    </citation>
    <scope>NUCLEOTIDE SEQUENCE [LARGE SCALE MRNA] (ISOFORM 1)</scope>
    <source>
        <tissue>Lung</tissue>
    </source>
</reference>
<reference key="2">
    <citation type="journal article" date="2004" name="Genome Res.">
        <title>The status, quality, and expansion of the NIH full-length cDNA project: the Mammalian Gene Collection (MGC).</title>
        <authorList>
            <consortium name="The MGC Project Team"/>
        </authorList>
    </citation>
    <scope>NUCLEOTIDE SEQUENCE [LARGE SCALE MRNA] (ISOFORMS 2; 3 AND 4)</scope>
    <source>
        <strain>C57BL/6J</strain>
        <tissue>Brain</tissue>
    </source>
</reference>
<reference key="3">
    <citation type="journal article" date="2007" name="Neuroscience">
        <title>Echinoderm microtubule-associated protein like protein 4, a member of the echinoderm microtubule-associated protein family, stabilizes microtubules.</title>
        <authorList>
            <person name="Houtman S.H."/>
            <person name="Rutteman M."/>
            <person name="De Zeeuw C.I."/>
            <person name="French P.J."/>
        </authorList>
    </citation>
    <scope>FUNCTION</scope>
    <scope>SUBCELLULAR LOCATION</scope>
</reference>
<reference key="4">
    <citation type="journal article" date="2007" name="Proc. Natl. Acad. Sci. U.S.A.">
        <title>Large-scale phosphorylation analysis of mouse liver.</title>
        <authorList>
            <person name="Villen J."/>
            <person name="Beausoleil S.A."/>
            <person name="Gerber S.A."/>
            <person name="Gygi S.P."/>
        </authorList>
    </citation>
    <scope>PHOSPHORYLATION [LARGE SCALE ANALYSIS] AT SER-79</scope>
    <scope>IDENTIFICATION BY MASS SPECTROMETRY [LARGE SCALE ANALYSIS]</scope>
    <source>
        <tissue>Liver</tissue>
    </source>
</reference>
<reference key="5">
    <citation type="journal article" date="2010" name="Cell">
        <title>A tissue-specific atlas of mouse protein phosphorylation and expression.</title>
        <authorList>
            <person name="Huttlin E.L."/>
            <person name="Jedrychowski M.P."/>
            <person name="Elias J.E."/>
            <person name="Goswami T."/>
            <person name="Rad R."/>
            <person name="Beausoleil S.A."/>
            <person name="Villen J."/>
            <person name="Haas W."/>
            <person name="Sowa M.E."/>
            <person name="Gygi S.P."/>
        </authorList>
    </citation>
    <scope>PHOSPHORYLATION [LARGE SCALE ANALYSIS] AT SER-79; SER-144; SER-146 AND SER-908</scope>
    <scope>IDENTIFICATION BY MASS SPECTROMETRY [LARGE SCALE ANALYSIS]</scope>
    <source>
        <tissue>Brain</tissue>
        <tissue>Brown adipose tissue</tissue>
        <tissue>Heart</tissue>
        <tissue>Kidney</tissue>
        <tissue>Liver</tissue>
        <tissue>Lung</tissue>
        <tissue>Pancreas</tissue>
        <tissue>Spleen</tissue>
        <tissue>Testis</tissue>
    </source>
</reference>
<organism>
    <name type="scientific">Mus musculus</name>
    <name type="common">Mouse</name>
    <dbReference type="NCBI Taxonomy" id="10090"/>
    <lineage>
        <taxon>Eukaryota</taxon>
        <taxon>Metazoa</taxon>
        <taxon>Chordata</taxon>
        <taxon>Craniata</taxon>
        <taxon>Vertebrata</taxon>
        <taxon>Euteleostomi</taxon>
        <taxon>Mammalia</taxon>
        <taxon>Eutheria</taxon>
        <taxon>Euarchontoglires</taxon>
        <taxon>Glires</taxon>
        <taxon>Rodentia</taxon>
        <taxon>Myomorpha</taxon>
        <taxon>Muroidea</taxon>
        <taxon>Muridae</taxon>
        <taxon>Murinae</taxon>
        <taxon>Mus</taxon>
        <taxon>Mus</taxon>
    </lineage>
</organism>
<proteinExistence type="evidence at protein level"/>
<accession>Q3UMY5</accession>
<accession>Q6NS73</accession>
<accession>Q6NXL8</accession>
<accession>Q6NZJ8</accession>
<accession>Q6P1A7</accession>
<sequence>MDGFAGSLDDSISAASTSDVQDRLSALESRVQQQEDEITVLKAALADVLRRLAISEDHVASVKKSMPSKGQPSLREAISMSCITNGSGISRKQNHTSSVSIARKETLSSAAKSGTEKKKEKPQGQREKKEDSHSNDQSPQIRASPSPQPSSQPLQINRQTPESKSSAPIKSIKRPPTAEKSHNSWENSDDSRNKLMKTVSTSKLISKVIKNADKHKDVIVNQAKMSTREKNSQEGEYIKMFMRGRPITMFIPSDVDNYDDIRTELPPEKLKLEWVYGYRGKDCRANVYLLPTGEIVYFIASVVVLFNYEERTQRHYLGHTDCVRCLAVHPDKIRIATGQIAGVDKDGRPLQPHVRVWDSVSLTTLHVIGLGTFERGVGCLDFSKADSGVHLCVIDDSNEHMLTVWDWQKKSKIAEIKTTNEVVLAVEFHPTDANTIITCGKSHIFFWTWSGNSLTRKQGIFGKYEKPKFVQCLAFLGNGDVLTGDSGGVMLIWSKTMVEPPPGKGPKGVYQINRQIKAHDGSVFTLCQMRNGMLLTGGGKDRKIILWDHDLNLEREIEVPDQYGTIRAVAEGRAEQFLVGTSRNFILRGTFNDGFQIEVQGHRDELWGLATHPFKDLLLTCAQDRQVCMWNSVEHRLEWTRLVDEPGHCADFHPSGTVVAIGTHSGRWFVLDAETRDLVSIHTDGNEQLSVMRYSVDGTLLAVGSHDNFIYLYTVLENGRKYSRYGKCTGHSSYITHLDWSPDNKHIMSNSGDYEILYWDIENGCKLIRNRSDCKDIDWTTYTCVLGFQVFGVWPEGSDGTDINALVRSHNRRVIAVADDFCKVHLFQYPCSKAKAPSHKYSAHSSHVTNVSFTHNDSHLISTGGKDMSIIQWKLVEKLPVPQNEVITDASVTKTPASSSETARPSNSPPLPPSLPLTGTAEEESRMGSSPTLVENSLEQIAEPSEEQSEWGSEDLGVVIDEEPASELSETQGATELPEEERGITPLC</sequence>
<protein>
    <recommendedName>
        <fullName>Echinoderm microtubule-associated protein-like 4</fullName>
        <shortName>EMAP-4</shortName>
    </recommendedName>
</protein>
<comment type="function">
    <text evidence="1 3">Essential for the stability of microtubules (MTs) (PubMed:17196341). Essential for the formation of MTs (By similarity). Required for the organization of the mitotic spindle and for the proper attachment of kinetochores to MTs (By similarity). Promotes the recruitment of NUDC to the mitotic spindle for mitotic progression (By similarity).</text>
</comment>
<comment type="subunit">
    <text evidence="1">Homotrimer; self-association is mediated by the N-terminal coiled coil (By similarity). Interacts (via WD repeats) with NUDC (By similarity). Interacts with alpha- and beta-tubulin during mitosis (By similarity).</text>
</comment>
<comment type="subcellular location">
    <subcellularLocation>
        <location evidence="3 5">Cytoplasm</location>
        <location evidence="3 5">Cytoskeleton</location>
    </subcellularLocation>
    <subcellularLocation>
        <location evidence="3">Cytoplasm</location>
        <location evidence="3">Cytoskeleton</location>
        <location evidence="3">Spindle</location>
    </subcellularLocation>
    <subcellularLocation>
        <location evidence="1">Cytoplasm</location>
    </subcellularLocation>
    <subcellularLocation>
        <location evidence="1">Cytoplasm</location>
        <location evidence="1">Cytoskeleton</location>
        <location evidence="1">Microtubule organizing center</location>
    </subcellularLocation>
    <subcellularLocation>
        <location evidence="1">Midbody</location>
    </subcellularLocation>
    <text evidence="1">Localizes to microtubules (MTs) during interphase with a significantly reduced affinity for MTs during mitosis.</text>
</comment>
<comment type="alternative products">
    <event type="alternative splicing"/>
    <isoform>
        <id>Q3UMY5-1</id>
        <name>1</name>
        <sequence type="displayed"/>
    </isoform>
    <isoform>
        <id>Q3UMY5-2</id>
        <name>2</name>
        <sequence type="described" ref="VSP_024486 VSP_024487"/>
    </isoform>
    <isoform>
        <id>Q3UMY5-3</id>
        <name>3</name>
        <sequence type="described" ref="VSP_024484 VSP_024486"/>
    </isoform>
    <isoform>
        <id>Q3UMY5-4</id>
        <name>4</name>
        <sequence type="described" ref="VSP_024485 VSP_024487"/>
    </isoform>
</comment>
<comment type="PTM">
    <text evidence="1">Phosphorylated during mitosis (By similarity). Phosphorylation at Ser-144 and Ser-146 promotes its dissociation from microtubules during mitosis which is required for efficient chromosome congression (By similarity).</text>
</comment>
<comment type="similarity">
    <text evidence="5">Belongs to the WD repeat EMAP family.</text>
</comment>
<name>EMAL4_MOUSE</name>